<gene>
    <name evidence="1" type="primary">fusA</name>
    <name type="ordered locus">PTH_0317</name>
</gene>
<feature type="chain" id="PRO_1000074964" description="Elongation factor G">
    <location>
        <begin position="1"/>
        <end position="692"/>
    </location>
</feature>
<feature type="domain" description="tr-type G">
    <location>
        <begin position="8"/>
        <end position="282"/>
    </location>
</feature>
<feature type="binding site" evidence="1">
    <location>
        <begin position="17"/>
        <end position="24"/>
    </location>
    <ligand>
        <name>GTP</name>
        <dbReference type="ChEBI" id="CHEBI:37565"/>
    </ligand>
</feature>
<feature type="binding site" evidence="1">
    <location>
        <begin position="81"/>
        <end position="85"/>
    </location>
    <ligand>
        <name>GTP</name>
        <dbReference type="ChEBI" id="CHEBI:37565"/>
    </ligand>
</feature>
<feature type="binding site" evidence="1">
    <location>
        <begin position="135"/>
        <end position="138"/>
    </location>
    <ligand>
        <name>GTP</name>
        <dbReference type="ChEBI" id="CHEBI:37565"/>
    </ligand>
</feature>
<dbReference type="EMBL" id="AP009389">
    <property type="protein sequence ID" value="BAF58498.1"/>
    <property type="molecule type" value="Genomic_DNA"/>
</dbReference>
<dbReference type="SMR" id="A5D5I7"/>
<dbReference type="STRING" id="370438.PTH_0317"/>
<dbReference type="KEGG" id="pth:PTH_0317"/>
<dbReference type="eggNOG" id="COG0480">
    <property type="taxonomic scope" value="Bacteria"/>
</dbReference>
<dbReference type="HOGENOM" id="CLU_002794_4_1_9"/>
<dbReference type="Proteomes" id="UP000006556">
    <property type="component" value="Chromosome"/>
</dbReference>
<dbReference type="GO" id="GO:0005737">
    <property type="term" value="C:cytoplasm"/>
    <property type="evidence" value="ECO:0007669"/>
    <property type="project" value="UniProtKB-SubCell"/>
</dbReference>
<dbReference type="GO" id="GO:0005525">
    <property type="term" value="F:GTP binding"/>
    <property type="evidence" value="ECO:0007669"/>
    <property type="project" value="UniProtKB-UniRule"/>
</dbReference>
<dbReference type="GO" id="GO:0003924">
    <property type="term" value="F:GTPase activity"/>
    <property type="evidence" value="ECO:0007669"/>
    <property type="project" value="InterPro"/>
</dbReference>
<dbReference type="GO" id="GO:0003746">
    <property type="term" value="F:translation elongation factor activity"/>
    <property type="evidence" value="ECO:0007669"/>
    <property type="project" value="UniProtKB-UniRule"/>
</dbReference>
<dbReference type="GO" id="GO:0032790">
    <property type="term" value="P:ribosome disassembly"/>
    <property type="evidence" value="ECO:0007669"/>
    <property type="project" value="TreeGrafter"/>
</dbReference>
<dbReference type="CDD" id="cd01886">
    <property type="entry name" value="EF-G"/>
    <property type="match status" value="1"/>
</dbReference>
<dbReference type="CDD" id="cd16262">
    <property type="entry name" value="EFG_III"/>
    <property type="match status" value="1"/>
</dbReference>
<dbReference type="CDD" id="cd01434">
    <property type="entry name" value="EFG_mtEFG1_IV"/>
    <property type="match status" value="1"/>
</dbReference>
<dbReference type="CDD" id="cd03713">
    <property type="entry name" value="EFG_mtEFG_C"/>
    <property type="match status" value="1"/>
</dbReference>
<dbReference type="CDD" id="cd04088">
    <property type="entry name" value="EFG_mtEFG_II"/>
    <property type="match status" value="1"/>
</dbReference>
<dbReference type="FunFam" id="2.40.30.10:FF:000006">
    <property type="entry name" value="Elongation factor G"/>
    <property type="match status" value="1"/>
</dbReference>
<dbReference type="FunFam" id="3.30.230.10:FF:000003">
    <property type="entry name" value="Elongation factor G"/>
    <property type="match status" value="1"/>
</dbReference>
<dbReference type="FunFam" id="3.30.70.240:FF:000001">
    <property type="entry name" value="Elongation factor G"/>
    <property type="match status" value="1"/>
</dbReference>
<dbReference type="FunFam" id="3.30.70.870:FF:000001">
    <property type="entry name" value="Elongation factor G"/>
    <property type="match status" value="1"/>
</dbReference>
<dbReference type="FunFam" id="3.40.50.300:FF:000029">
    <property type="entry name" value="Elongation factor G"/>
    <property type="match status" value="1"/>
</dbReference>
<dbReference type="Gene3D" id="3.30.230.10">
    <property type="match status" value="1"/>
</dbReference>
<dbReference type="Gene3D" id="3.30.70.240">
    <property type="match status" value="1"/>
</dbReference>
<dbReference type="Gene3D" id="3.30.70.870">
    <property type="entry name" value="Elongation Factor G (Translational Gtpase), domain 3"/>
    <property type="match status" value="1"/>
</dbReference>
<dbReference type="Gene3D" id="3.40.50.300">
    <property type="entry name" value="P-loop containing nucleotide triphosphate hydrolases"/>
    <property type="match status" value="1"/>
</dbReference>
<dbReference type="Gene3D" id="2.40.30.10">
    <property type="entry name" value="Translation factors"/>
    <property type="match status" value="1"/>
</dbReference>
<dbReference type="HAMAP" id="MF_00054_B">
    <property type="entry name" value="EF_G_EF_2_B"/>
    <property type="match status" value="1"/>
</dbReference>
<dbReference type="InterPro" id="IPR053905">
    <property type="entry name" value="EF-G-like_DII"/>
</dbReference>
<dbReference type="InterPro" id="IPR041095">
    <property type="entry name" value="EFG_II"/>
</dbReference>
<dbReference type="InterPro" id="IPR009022">
    <property type="entry name" value="EFG_III"/>
</dbReference>
<dbReference type="InterPro" id="IPR035647">
    <property type="entry name" value="EFG_III/V"/>
</dbReference>
<dbReference type="InterPro" id="IPR047872">
    <property type="entry name" value="EFG_IV"/>
</dbReference>
<dbReference type="InterPro" id="IPR035649">
    <property type="entry name" value="EFG_V"/>
</dbReference>
<dbReference type="InterPro" id="IPR000640">
    <property type="entry name" value="EFG_V-like"/>
</dbReference>
<dbReference type="InterPro" id="IPR031157">
    <property type="entry name" value="G_TR_CS"/>
</dbReference>
<dbReference type="InterPro" id="IPR027417">
    <property type="entry name" value="P-loop_NTPase"/>
</dbReference>
<dbReference type="InterPro" id="IPR020568">
    <property type="entry name" value="Ribosomal_Su5_D2-typ_SF"/>
</dbReference>
<dbReference type="InterPro" id="IPR014721">
    <property type="entry name" value="Ribsml_uS5_D2-typ_fold_subgr"/>
</dbReference>
<dbReference type="InterPro" id="IPR005225">
    <property type="entry name" value="Small_GTP-bd"/>
</dbReference>
<dbReference type="InterPro" id="IPR000795">
    <property type="entry name" value="T_Tr_GTP-bd_dom"/>
</dbReference>
<dbReference type="InterPro" id="IPR009000">
    <property type="entry name" value="Transl_B-barrel_sf"/>
</dbReference>
<dbReference type="InterPro" id="IPR004540">
    <property type="entry name" value="Transl_elong_EFG/EF2"/>
</dbReference>
<dbReference type="InterPro" id="IPR005517">
    <property type="entry name" value="Transl_elong_EFG/EF2_IV"/>
</dbReference>
<dbReference type="NCBIfam" id="TIGR00484">
    <property type="entry name" value="EF-G"/>
    <property type="match status" value="1"/>
</dbReference>
<dbReference type="NCBIfam" id="NF009379">
    <property type="entry name" value="PRK12740.1-3"/>
    <property type="match status" value="1"/>
</dbReference>
<dbReference type="NCBIfam" id="NF009381">
    <property type="entry name" value="PRK12740.1-5"/>
    <property type="match status" value="1"/>
</dbReference>
<dbReference type="NCBIfam" id="NF009891">
    <property type="entry name" value="PRK13351.1-1"/>
    <property type="match status" value="1"/>
</dbReference>
<dbReference type="NCBIfam" id="TIGR00231">
    <property type="entry name" value="small_GTP"/>
    <property type="match status" value="1"/>
</dbReference>
<dbReference type="PANTHER" id="PTHR43261:SF1">
    <property type="entry name" value="RIBOSOME-RELEASING FACTOR 2, MITOCHONDRIAL"/>
    <property type="match status" value="1"/>
</dbReference>
<dbReference type="PANTHER" id="PTHR43261">
    <property type="entry name" value="TRANSLATION ELONGATION FACTOR G-RELATED"/>
    <property type="match status" value="1"/>
</dbReference>
<dbReference type="Pfam" id="PF22042">
    <property type="entry name" value="EF-G_D2"/>
    <property type="match status" value="1"/>
</dbReference>
<dbReference type="Pfam" id="PF00679">
    <property type="entry name" value="EFG_C"/>
    <property type="match status" value="1"/>
</dbReference>
<dbReference type="Pfam" id="PF14492">
    <property type="entry name" value="EFG_III"/>
    <property type="match status" value="1"/>
</dbReference>
<dbReference type="Pfam" id="PF03764">
    <property type="entry name" value="EFG_IV"/>
    <property type="match status" value="1"/>
</dbReference>
<dbReference type="Pfam" id="PF00009">
    <property type="entry name" value="GTP_EFTU"/>
    <property type="match status" value="1"/>
</dbReference>
<dbReference type="PRINTS" id="PR00315">
    <property type="entry name" value="ELONGATNFCT"/>
</dbReference>
<dbReference type="SMART" id="SM00838">
    <property type="entry name" value="EFG_C"/>
    <property type="match status" value="1"/>
</dbReference>
<dbReference type="SMART" id="SM00889">
    <property type="entry name" value="EFG_IV"/>
    <property type="match status" value="1"/>
</dbReference>
<dbReference type="SUPFAM" id="SSF54980">
    <property type="entry name" value="EF-G C-terminal domain-like"/>
    <property type="match status" value="2"/>
</dbReference>
<dbReference type="SUPFAM" id="SSF52540">
    <property type="entry name" value="P-loop containing nucleoside triphosphate hydrolases"/>
    <property type="match status" value="1"/>
</dbReference>
<dbReference type="SUPFAM" id="SSF54211">
    <property type="entry name" value="Ribosomal protein S5 domain 2-like"/>
    <property type="match status" value="1"/>
</dbReference>
<dbReference type="SUPFAM" id="SSF50447">
    <property type="entry name" value="Translation proteins"/>
    <property type="match status" value="1"/>
</dbReference>
<dbReference type="PROSITE" id="PS00301">
    <property type="entry name" value="G_TR_1"/>
    <property type="match status" value="1"/>
</dbReference>
<dbReference type="PROSITE" id="PS51722">
    <property type="entry name" value="G_TR_2"/>
    <property type="match status" value="1"/>
</dbReference>
<protein>
    <recommendedName>
        <fullName evidence="1">Elongation factor G</fullName>
        <shortName evidence="1">EF-G</shortName>
    </recommendedName>
</protein>
<keyword id="KW-0963">Cytoplasm</keyword>
<keyword id="KW-0251">Elongation factor</keyword>
<keyword id="KW-0342">GTP-binding</keyword>
<keyword id="KW-0547">Nucleotide-binding</keyword>
<keyword id="KW-0648">Protein biosynthesis</keyword>
<keyword id="KW-1185">Reference proteome</keyword>
<accession>A5D5I7</accession>
<reference key="1">
    <citation type="journal article" date="2008" name="Genome Res.">
        <title>The genome of Pelotomaculum thermopropionicum reveals niche-associated evolution in anaerobic microbiota.</title>
        <authorList>
            <person name="Kosaka T."/>
            <person name="Kato S."/>
            <person name="Shimoyama T."/>
            <person name="Ishii S."/>
            <person name="Abe T."/>
            <person name="Watanabe K."/>
        </authorList>
    </citation>
    <scope>NUCLEOTIDE SEQUENCE [LARGE SCALE GENOMIC DNA]</scope>
    <source>
        <strain>DSM 13744 / JCM 10971 / SI</strain>
    </source>
</reference>
<sequence length="692" mass="76548">MARQFPLEKTRNIGIMAHIDAGKTTTTERILFYTGRVHKIGEVHEGTATMDWMAQEQERGITITSAATSCRWRDCQINIIDTPGHVDFTVEVERSLRVLDGAVAVFCSVGGVEPQSETVWRQADKYGVPRIAYINKMDRVGADFHRGIQMIRERLGANPVAIQLPIGVEDGFCGVVDLVRNRAIIYTDDLGTTSEETEIPPELAGEAAAFRERLIEAVAEFDESLMEKYLENGELTEEEIKEGLRRATLAVKIVPVLCGSSFKNKGVQPLLDAIVDYLPAPTDIPAIRGVNPVSGAGEVREARDDEPFSALAFKIMTDPYVGKLTFFRVYSGRLKSGSYVYNSTRNRRERVGRILRMHANHREDIEEVCAGDIVAAVGLKTTTTGDTLCDEKEPVILESMEFPEPVIQVAIEPKTKADQEKMGVALQKLAEEDPTFRVSTDPETGQTLISGMGELHLEIIVDRMMREFKVEANVGRPQVAYKETVRKKARAEGKFIRQTGGRGQYGHVVLEVEPREPGSGYLFTSKIIGGVIPKEYIPAVDAGAKEAMENGVLAGFPVIDVGVTLLDGSYHEVDSSEMAFKIAGSIGFKDAARRADPVLLEPVMKVEVVVNEEYMGDVIGDLNSRRGRIEEMEARNGMQVIHAYVPLAEMFGYATDLRSRTQGRGNYTMQFSHYAQVPDNIAEGIIARRVGR</sequence>
<comment type="function">
    <text evidence="1">Catalyzes the GTP-dependent ribosomal translocation step during translation elongation. During this step, the ribosome changes from the pre-translocational (PRE) to the post-translocational (POST) state as the newly formed A-site-bound peptidyl-tRNA and P-site-bound deacylated tRNA move to the P and E sites, respectively. Catalyzes the coordinated movement of the two tRNA molecules, the mRNA and conformational changes in the ribosome.</text>
</comment>
<comment type="subcellular location">
    <subcellularLocation>
        <location evidence="1">Cytoplasm</location>
    </subcellularLocation>
</comment>
<comment type="similarity">
    <text evidence="1">Belongs to the TRAFAC class translation factor GTPase superfamily. Classic translation factor GTPase family. EF-G/EF-2 subfamily.</text>
</comment>
<evidence type="ECO:0000255" key="1">
    <source>
        <dbReference type="HAMAP-Rule" id="MF_00054"/>
    </source>
</evidence>
<proteinExistence type="inferred from homology"/>
<organism>
    <name type="scientific">Pelotomaculum thermopropionicum (strain DSM 13744 / JCM 10971 / SI)</name>
    <dbReference type="NCBI Taxonomy" id="370438"/>
    <lineage>
        <taxon>Bacteria</taxon>
        <taxon>Bacillati</taxon>
        <taxon>Bacillota</taxon>
        <taxon>Clostridia</taxon>
        <taxon>Eubacteriales</taxon>
        <taxon>Desulfotomaculaceae</taxon>
        <taxon>Pelotomaculum</taxon>
    </lineage>
</organism>
<name>EFG_PELTS</name>